<protein>
    <recommendedName>
        <fullName evidence="3">Capsid protein VP4</fullName>
    </recommendedName>
</protein>
<dbReference type="EMBL" id="KY780159">
    <property type="protein sequence ID" value="ARM37825.1"/>
    <property type="molecule type" value="Genomic_DNA"/>
</dbReference>
<dbReference type="PDB" id="6OJ0">
    <property type="method" value="EM"/>
    <property type="resolution" value="3.70 A"/>
    <property type="chains" value="A/B/C/D/E/F/G/H/I/J/K/L/M/N/O/P/Q/R/S/T/U/V/W/X/a/b/c/d/e/f=1-181"/>
</dbReference>
<dbReference type="PDBsum" id="6OJ0"/>
<dbReference type="EMDB" id="EMD-20083"/>
<dbReference type="SMR" id="A0A1W6I187"/>
<dbReference type="Proteomes" id="UP000224527">
    <property type="component" value="Segment"/>
</dbReference>
<dbReference type="GO" id="GO:0019030">
    <property type="term" value="C:icosahedral viral capsid"/>
    <property type="evidence" value="ECO:0000314"/>
    <property type="project" value="UniProtKB"/>
</dbReference>
<keyword id="KW-0002">3D-structure</keyword>
<keyword id="KW-0167">Capsid protein</keyword>
<keyword id="KW-1185">Reference proteome</keyword>
<keyword id="KW-0946">Virion</keyword>
<accession>A0A1W6I187</accession>
<evidence type="ECO:0000269" key="1">
    <source>
    </source>
</evidence>
<evidence type="ECO:0000303" key="2">
    <source>
    </source>
</evidence>
<evidence type="ECO:0000312" key="3">
    <source>
        <dbReference type="EMBL" id="ARM37825.1"/>
    </source>
</evidence>
<evidence type="ECO:0007744" key="4">
    <source>
        <dbReference type="PDB" id="6OJ0"/>
    </source>
</evidence>
<comment type="function">
    <text evidence="1">VP4 self-assembles to form, together with capsid protein VP10, an icosahedral caspid of 87 nm in diameter, with a T=43 symmetry and composed of 420 hexamers and 12 pentamers (PubMed:31636205). VP4 proteins arrange into hexons, while VP10 proteins form the pentameric densities located at the 5-fold axes in the virion (PubMed:31636205). The stoichiometry of VP4:VP10 is 42:1 (PubMed:31636205).</text>
</comment>
<comment type="subcellular location">
    <subcellularLocation>
        <location evidence="1">Virion</location>
    </subcellularLocation>
</comment>
<proteinExistence type="evidence at protein level"/>
<gene>
    <name evidence="2" type="ORF">ORF43</name>
</gene>
<reference key="1">
    <citation type="journal article" date="2017" name="J. Virol.">
        <title>A novel type of polyhedral viruses infecting hyperthermophilic archaea.</title>
        <authorList>
            <person name="Liu Y."/>
            <person name="Ishino S."/>
            <person name="Ishino Y."/>
            <person name="Pehau-Arnaudet G."/>
            <person name="Krupovic M."/>
            <person name="Prangishvili D."/>
        </authorList>
    </citation>
    <scope>NUCLEOTIDE SEQUENCE [LARGE SCALE GENOMIC DNA]</scope>
    <source>
        <strain evidence="3">S14</strain>
    </source>
</reference>
<reference evidence="4" key="2">
    <citation type="journal article" date="2019" name="Proc. Natl. Acad. Sci. U.S.A.">
        <title>A packing for A-form DNA in an icosahedral virus.</title>
        <authorList>
            <person name="Wang F."/>
            <person name="Liu Y."/>
            <person name="Su Z."/>
            <person name="Osinski T."/>
            <person name="de Oliveira G.A.P."/>
            <person name="Conway J.F."/>
            <person name="Schouten S."/>
            <person name="Krupovic M."/>
            <person name="Prangishvili D."/>
            <person name="Egelman E.H."/>
        </authorList>
    </citation>
    <scope>STRUCTURE BY ELECTRON MICROSCOPY (3.70 ANGSTROMS)</scope>
    <scope>FUNCTION</scope>
    <scope>SUBCELLULAR LOCATION</scope>
</reference>
<organismHost>
    <name type="scientific">Sulfolobus</name>
    <dbReference type="NCBI Taxonomy" id="2284"/>
</organismHost>
<organism>
    <name type="scientific">Sulfolobus polyhedral virus 1</name>
    <name type="common">SPV1</name>
    <dbReference type="NCBI Taxonomy" id="1982658"/>
    <lineage>
        <taxon>Viruses</taxon>
        <taxon>Viruses incertae sedis</taxon>
        <taxon>Portogloboviridae</taxon>
        <taxon>Alphaportoglobovirus</taxon>
        <taxon>Sulfolobus alphaportoglobovirus 1</taxon>
    </lineage>
</organism>
<feature type="chain" id="PRO_0000453898" description="Capsid protein VP4">
    <location>
        <begin position="1"/>
        <end position="181"/>
    </location>
</feature>
<name>CAPS1_SPV1</name>
<sequence length="181" mass="19387">MSESVTQQVFNFAVTKSQPFGGYVYSTNLTASTSSAVTSTQLTPLNLSITLGQITLSGNSLVIPATQIWYLTDAYVSVPDYTNITNGAEADGVILIYKDGVKLMLTTPLISSMSISNPARTHLAQAVKYSPQSILTMYFNPTKPATASTSYPNTVYFTVVVVDFSYAQNPARAVVSANAVM</sequence>